<reference key="1">
    <citation type="submission" date="2008-08" db="EMBL/GenBank/DDBJ databases">
        <title>Complete sequence of Acidithiobacillus ferrooxidans ATCC 53993.</title>
        <authorList>
            <person name="Lucas S."/>
            <person name="Copeland A."/>
            <person name="Lapidus A."/>
            <person name="Glavina del Rio T."/>
            <person name="Dalin E."/>
            <person name="Tice H."/>
            <person name="Bruce D."/>
            <person name="Goodwin L."/>
            <person name="Pitluck S."/>
            <person name="Sims D."/>
            <person name="Brettin T."/>
            <person name="Detter J.C."/>
            <person name="Han C."/>
            <person name="Kuske C.R."/>
            <person name="Larimer F."/>
            <person name="Land M."/>
            <person name="Hauser L."/>
            <person name="Kyrpides N."/>
            <person name="Lykidis A."/>
            <person name="Borole A.P."/>
        </authorList>
    </citation>
    <scope>NUCLEOTIDE SEQUENCE [LARGE SCALE GENOMIC DNA]</scope>
    <source>
        <strain>ATCC 53993 / BNL-5-31</strain>
    </source>
</reference>
<comment type="function">
    <text evidence="1">Part of the Sec protein translocase complex. Interacts with the SecYEG preprotein conducting channel. Has a central role in coupling the hydrolysis of ATP to the transfer of proteins into and across the cell membrane, serving as an ATP-driven molecular motor driving the stepwise translocation of polypeptide chains across the membrane.</text>
</comment>
<comment type="catalytic activity">
    <reaction evidence="1">
        <text>ATP + H2O + cellular proteinSide 1 = ADP + phosphate + cellular proteinSide 2.</text>
        <dbReference type="EC" id="7.4.2.8"/>
    </reaction>
</comment>
<comment type="cofactor">
    <cofactor evidence="1">
        <name>Zn(2+)</name>
        <dbReference type="ChEBI" id="CHEBI:29105"/>
    </cofactor>
    <text evidence="1">May bind 1 zinc ion per subunit.</text>
</comment>
<comment type="subunit">
    <text evidence="1">Monomer and homodimer. Part of the essential Sec protein translocation apparatus which comprises SecA, SecYEG and auxiliary proteins SecDF-YajC and YidC.</text>
</comment>
<comment type="subcellular location">
    <subcellularLocation>
        <location evidence="1">Cell inner membrane</location>
        <topology evidence="1">Peripheral membrane protein</topology>
        <orientation evidence="1">Cytoplasmic side</orientation>
    </subcellularLocation>
    <subcellularLocation>
        <location evidence="1">Cytoplasm</location>
    </subcellularLocation>
    <text evidence="1">Distribution is 50-50.</text>
</comment>
<comment type="similarity">
    <text evidence="1">Belongs to the SecA family.</text>
</comment>
<accession>B5ELD9</accession>
<keyword id="KW-0067">ATP-binding</keyword>
<keyword id="KW-0997">Cell inner membrane</keyword>
<keyword id="KW-1003">Cell membrane</keyword>
<keyword id="KW-0963">Cytoplasm</keyword>
<keyword id="KW-0472">Membrane</keyword>
<keyword id="KW-0479">Metal-binding</keyword>
<keyword id="KW-0547">Nucleotide-binding</keyword>
<keyword id="KW-0653">Protein transport</keyword>
<keyword id="KW-1278">Translocase</keyword>
<keyword id="KW-0811">Translocation</keyword>
<keyword id="KW-0813">Transport</keyword>
<keyword id="KW-0862">Zinc</keyword>
<proteinExistence type="inferred from homology"/>
<feature type="chain" id="PRO_1000144967" description="Protein translocase subunit SecA">
    <location>
        <begin position="1"/>
        <end position="914"/>
    </location>
</feature>
<feature type="binding site" evidence="1">
    <location>
        <position position="87"/>
    </location>
    <ligand>
        <name>ATP</name>
        <dbReference type="ChEBI" id="CHEBI:30616"/>
    </ligand>
</feature>
<feature type="binding site" evidence="1">
    <location>
        <begin position="105"/>
        <end position="109"/>
    </location>
    <ligand>
        <name>ATP</name>
        <dbReference type="ChEBI" id="CHEBI:30616"/>
    </ligand>
</feature>
<feature type="binding site" evidence="1">
    <location>
        <position position="500"/>
    </location>
    <ligand>
        <name>ATP</name>
        <dbReference type="ChEBI" id="CHEBI:30616"/>
    </ligand>
</feature>
<feature type="binding site" evidence="1">
    <location>
        <position position="898"/>
    </location>
    <ligand>
        <name>Zn(2+)</name>
        <dbReference type="ChEBI" id="CHEBI:29105"/>
    </ligand>
</feature>
<feature type="binding site" evidence="1">
    <location>
        <position position="900"/>
    </location>
    <ligand>
        <name>Zn(2+)</name>
        <dbReference type="ChEBI" id="CHEBI:29105"/>
    </ligand>
</feature>
<feature type="binding site" evidence="1">
    <location>
        <position position="909"/>
    </location>
    <ligand>
        <name>Zn(2+)</name>
        <dbReference type="ChEBI" id="CHEBI:29105"/>
    </ligand>
</feature>
<feature type="binding site" evidence="1">
    <location>
        <position position="910"/>
    </location>
    <ligand>
        <name>Zn(2+)</name>
        <dbReference type="ChEBI" id="CHEBI:29105"/>
    </ligand>
</feature>
<evidence type="ECO:0000255" key="1">
    <source>
        <dbReference type="HAMAP-Rule" id="MF_01382"/>
    </source>
</evidence>
<dbReference type="EC" id="7.4.2.8" evidence="1"/>
<dbReference type="EMBL" id="CP001132">
    <property type="protein sequence ID" value="ACH82655.1"/>
    <property type="molecule type" value="Genomic_DNA"/>
</dbReference>
<dbReference type="RefSeq" id="WP_012536028.1">
    <property type="nucleotide sequence ID" value="NC_011206.1"/>
</dbReference>
<dbReference type="SMR" id="B5ELD9"/>
<dbReference type="GeneID" id="65279606"/>
<dbReference type="KEGG" id="afe:Lferr_0401"/>
<dbReference type="eggNOG" id="COG0653">
    <property type="taxonomic scope" value="Bacteria"/>
</dbReference>
<dbReference type="HOGENOM" id="CLU_005314_3_0_6"/>
<dbReference type="GO" id="GO:0031522">
    <property type="term" value="C:cell envelope Sec protein transport complex"/>
    <property type="evidence" value="ECO:0007669"/>
    <property type="project" value="TreeGrafter"/>
</dbReference>
<dbReference type="GO" id="GO:0005829">
    <property type="term" value="C:cytosol"/>
    <property type="evidence" value="ECO:0007669"/>
    <property type="project" value="TreeGrafter"/>
</dbReference>
<dbReference type="GO" id="GO:0005886">
    <property type="term" value="C:plasma membrane"/>
    <property type="evidence" value="ECO:0007669"/>
    <property type="project" value="UniProtKB-SubCell"/>
</dbReference>
<dbReference type="GO" id="GO:0005524">
    <property type="term" value="F:ATP binding"/>
    <property type="evidence" value="ECO:0007669"/>
    <property type="project" value="UniProtKB-UniRule"/>
</dbReference>
<dbReference type="GO" id="GO:0046872">
    <property type="term" value="F:metal ion binding"/>
    <property type="evidence" value="ECO:0007669"/>
    <property type="project" value="UniProtKB-KW"/>
</dbReference>
<dbReference type="GO" id="GO:0008564">
    <property type="term" value="F:protein-exporting ATPase activity"/>
    <property type="evidence" value="ECO:0007669"/>
    <property type="project" value="UniProtKB-EC"/>
</dbReference>
<dbReference type="GO" id="GO:0065002">
    <property type="term" value="P:intracellular protein transmembrane transport"/>
    <property type="evidence" value="ECO:0007669"/>
    <property type="project" value="UniProtKB-UniRule"/>
</dbReference>
<dbReference type="GO" id="GO:0017038">
    <property type="term" value="P:protein import"/>
    <property type="evidence" value="ECO:0007669"/>
    <property type="project" value="InterPro"/>
</dbReference>
<dbReference type="GO" id="GO:0006605">
    <property type="term" value="P:protein targeting"/>
    <property type="evidence" value="ECO:0007669"/>
    <property type="project" value="UniProtKB-UniRule"/>
</dbReference>
<dbReference type="GO" id="GO:0043952">
    <property type="term" value="P:protein transport by the Sec complex"/>
    <property type="evidence" value="ECO:0007669"/>
    <property type="project" value="TreeGrafter"/>
</dbReference>
<dbReference type="CDD" id="cd17928">
    <property type="entry name" value="DEXDc_SecA"/>
    <property type="match status" value="1"/>
</dbReference>
<dbReference type="CDD" id="cd18803">
    <property type="entry name" value="SF2_C_secA"/>
    <property type="match status" value="1"/>
</dbReference>
<dbReference type="FunFam" id="3.40.50.300:FF:000113">
    <property type="entry name" value="Preprotein translocase subunit SecA"/>
    <property type="match status" value="1"/>
</dbReference>
<dbReference type="FunFam" id="3.90.1440.10:FF:000001">
    <property type="entry name" value="Preprotein translocase subunit SecA"/>
    <property type="match status" value="1"/>
</dbReference>
<dbReference type="FunFam" id="1.10.3060.10:FF:000003">
    <property type="entry name" value="Protein translocase subunit SecA"/>
    <property type="match status" value="1"/>
</dbReference>
<dbReference type="FunFam" id="3.40.50.300:FF:000334">
    <property type="entry name" value="Protein translocase subunit SecA"/>
    <property type="match status" value="1"/>
</dbReference>
<dbReference type="Gene3D" id="3.10.450.50">
    <property type="match status" value="1"/>
</dbReference>
<dbReference type="Gene3D" id="1.10.3060.10">
    <property type="entry name" value="Helical scaffold and wing domains of SecA"/>
    <property type="match status" value="1"/>
</dbReference>
<dbReference type="Gene3D" id="3.40.50.300">
    <property type="entry name" value="P-loop containing nucleotide triphosphate hydrolases"/>
    <property type="match status" value="2"/>
</dbReference>
<dbReference type="Gene3D" id="3.90.1440.10">
    <property type="entry name" value="SecA, preprotein cross-linking domain"/>
    <property type="match status" value="1"/>
</dbReference>
<dbReference type="HAMAP" id="MF_01382">
    <property type="entry name" value="SecA"/>
    <property type="match status" value="1"/>
</dbReference>
<dbReference type="InterPro" id="IPR014001">
    <property type="entry name" value="Helicase_ATP-bd"/>
</dbReference>
<dbReference type="InterPro" id="IPR001650">
    <property type="entry name" value="Helicase_C-like"/>
</dbReference>
<dbReference type="InterPro" id="IPR027417">
    <property type="entry name" value="P-loop_NTPase"/>
</dbReference>
<dbReference type="InterPro" id="IPR004027">
    <property type="entry name" value="SEC_C_motif"/>
</dbReference>
<dbReference type="InterPro" id="IPR000185">
    <property type="entry name" value="SecA"/>
</dbReference>
<dbReference type="InterPro" id="IPR020937">
    <property type="entry name" value="SecA_CS"/>
</dbReference>
<dbReference type="InterPro" id="IPR011115">
    <property type="entry name" value="SecA_DEAD"/>
</dbReference>
<dbReference type="InterPro" id="IPR014018">
    <property type="entry name" value="SecA_motor_DEAD"/>
</dbReference>
<dbReference type="InterPro" id="IPR011130">
    <property type="entry name" value="SecA_preprotein_X-link_dom"/>
</dbReference>
<dbReference type="InterPro" id="IPR044722">
    <property type="entry name" value="SecA_SF2_C"/>
</dbReference>
<dbReference type="InterPro" id="IPR011116">
    <property type="entry name" value="SecA_Wing/Scaffold"/>
</dbReference>
<dbReference type="InterPro" id="IPR036266">
    <property type="entry name" value="SecA_Wing/Scaffold_sf"/>
</dbReference>
<dbReference type="InterPro" id="IPR036670">
    <property type="entry name" value="SecA_X-link_sf"/>
</dbReference>
<dbReference type="NCBIfam" id="NF009538">
    <property type="entry name" value="PRK12904.1"/>
    <property type="match status" value="1"/>
</dbReference>
<dbReference type="NCBIfam" id="TIGR00963">
    <property type="entry name" value="secA"/>
    <property type="match status" value="1"/>
</dbReference>
<dbReference type="PANTHER" id="PTHR30612:SF0">
    <property type="entry name" value="CHLOROPLAST PROTEIN-TRANSPORTING ATPASE"/>
    <property type="match status" value="1"/>
</dbReference>
<dbReference type="PANTHER" id="PTHR30612">
    <property type="entry name" value="SECA INNER MEMBRANE COMPONENT OF SEC PROTEIN SECRETION SYSTEM"/>
    <property type="match status" value="1"/>
</dbReference>
<dbReference type="Pfam" id="PF21090">
    <property type="entry name" value="P-loop_SecA"/>
    <property type="match status" value="1"/>
</dbReference>
<dbReference type="Pfam" id="PF02810">
    <property type="entry name" value="SEC-C"/>
    <property type="match status" value="1"/>
</dbReference>
<dbReference type="Pfam" id="PF07517">
    <property type="entry name" value="SecA_DEAD"/>
    <property type="match status" value="1"/>
</dbReference>
<dbReference type="Pfam" id="PF01043">
    <property type="entry name" value="SecA_PP_bind"/>
    <property type="match status" value="1"/>
</dbReference>
<dbReference type="Pfam" id="PF07516">
    <property type="entry name" value="SecA_SW"/>
    <property type="match status" value="1"/>
</dbReference>
<dbReference type="PRINTS" id="PR00906">
    <property type="entry name" value="SECA"/>
</dbReference>
<dbReference type="SMART" id="SM00957">
    <property type="entry name" value="SecA_DEAD"/>
    <property type="match status" value="1"/>
</dbReference>
<dbReference type="SMART" id="SM00958">
    <property type="entry name" value="SecA_PP_bind"/>
    <property type="match status" value="1"/>
</dbReference>
<dbReference type="SUPFAM" id="SSF81886">
    <property type="entry name" value="Helical scaffold and wing domains of SecA"/>
    <property type="match status" value="1"/>
</dbReference>
<dbReference type="SUPFAM" id="SSF52540">
    <property type="entry name" value="P-loop containing nucleoside triphosphate hydrolases"/>
    <property type="match status" value="2"/>
</dbReference>
<dbReference type="SUPFAM" id="SSF81767">
    <property type="entry name" value="Pre-protein crosslinking domain of SecA"/>
    <property type="match status" value="1"/>
</dbReference>
<dbReference type="PROSITE" id="PS01312">
    <property type="entry name" value="SECA"/>
    <property type="match status" value="1"/>
</dbReference>
<dbReference type="PROSITE" id="PS51196">
    <property type="entry name" value="SECA_MOTOR_DEAD"/>
    <property type="match status" value="1"/>
</dbReference>
<organism>
    <name type="scientific">Acidithiobacillus ferrooxidans (strain ATCC 53993 / BNL-5-31)</name>
    <name type="common">Leptospirillum ferrooxidans (ATCC 53993)</name>
    <dbReference type="NCBI Taxonomy" id="380394"/>
    <lineage>
        <taxon>Bacteria</taxon>
        <taxon>Pseudomonadati</taxon>
        <taxon>Pseudomonadota</taxon>
        <taxon>Acidithiobacillia</taxon>
        <taxon>Acidithiobacillales</taxon>
        <taxon>Acidithiobacillaceae</taxon>
        <taxon>Acidithiobacillus</taxon>
    </lineage>
</organism>
<name>SECA_ACIF5</name>
<gene>
    <name evidence="1" type="primary">secA</name>
    <name type="ordered locus">Lferr_0401</name>
</gene>
<protein>
    <recommendedName>
        <fullName evidence="1">Protein translocase subunit SecA</fullName>
        <ecNumber evidence="1">7.4.2.8</ecNumber>
    </recommendedName>
</protein>
<sequence>MFGTIIRHVVGSRNDRLIKKARAIVAQVNALEDRFKAMDDATLAAQTAIFRERLARGEPLDALLPEAFAVVREVSRRVMGMRQYDVQIIGGFMLHEGKIAEMRTGEGKTLVATLPAYLNALQGKGVHVVTVNDYLASRDAEWVGKIHRFLGLSVGTIISDLSSEERRAAYAADITYGTNNEFGFDYLRDNMAFSPADRVQRGLHYAIIDEVDSILIDEARTPLIISGPTEENTDLYYRVDKLVGSFVVDEDYTVDEKARQVMLTEEGIEKAERLMAESGLLVDGDLYDLANVTLVHHLNQALRAHVIYRRETDYIVRDGEVCIVDEFTGRMMSGRRWSDGLHQAVEAKEGVAVQNENQTLASITFQNYFRMYEKLSGMTGTADTEAFELNQIYGLEVVIIPTHRPVCRTDFADLIYRTSQEKWKAIVEDIRGCQQRGQPVLVGTTSIEHNEFLSHLLKQARISHEVLNAKQHQREAEIIAQAGTPGAVTIATNMAGRGTDIVLGGNVGHQVDMVLANPDLEEEEKTRRIESLKSGWQGLHDAAIAAGGLHIIGTERHESRRIDNQLRGRSGRQGDPGTTRFYLSLDDPLMRIFGSDRLSGLMQKLGMKEGEAIEHPWVTKSIENAQRKVESRNFDIRKQLLEYDDVANEQRRIIYQQRNAFMDADDVSAEIRALRDDVLDAVLAATAPEGVMEERWDLPGLEAALDRIFGLQVPVGQWLEQDKGLTHAALRERIMEMVLSAYAAKESLMGSEMTRHFEKSILLQVLDSQWKDHLASMDHLREGIHLRGYAQKNPKQEYKRESLIMFNAMLDQLREEVVSTLSRLHVSPAPAEPLDWDAIARAAQPRHLQFSHPDFAAAAAPLVEDAGLALTGLGVIGEQEAGHSPAISDDKVGRNQPCPCGSGKKYKHCHGRLQ</sequence>